<sequence length="375" mass="40418">MMSKPHHATLESIKYTPGSLRLLDQRKLPLETVFDDVLTVEDIWSAIKEMRVRGAPAIAVSAALGIAVATQRKAANGELKSGREVQTFLLTSCDFVMTSRPTAVNLFNCLRDLKAQVDKLDPTKAAAEVAQAFVELAEAVYTNDVAFNEGIMRHGAAHILAAAKAEGRDKVSILTICNTGALATSRYGTALGVVRQLFYDGKLERVYACETRPWNQGARLTVYECVQEDIPCTLICDGAASSLMLNRKIDAVVVGADRICQNGDTANKIGTYNLAVSAKFHGVKLYVAAPTTTLDVKTASGNHVEIEEREPTEITTNLVTKQRVVADGPHLSIWNPVFDITPSELITGGIITEKGVQAPAASAPYYDIASIIAQA</sequence>
<feature type="chain" id="PRO_0000402001" description="Methylthioribose-1-phosphate isomerase">
    <location>
        <begin position="1"/>
        <end position="375"/>
    </location>
</feature>
<feature type="active site" description="Proton donor" evidence="1">
    <location>
        <position position="257"/>
    </location>
</feature>
<feature type="site" description="Transition state stabilizer" evidence="1">
    <location>
        <position position="177"/>
    </location>
</feature>
<feature type="strand" evidence="3">
    <location>
        <begin position="12"/>
        <end position="16"/>
    </location>
</feature>
<feature type="strand" evidence="3">
    <location>
        <begin position="19"/>
        <end position="23"/>
    </location>
</feature>
<feature type="turn" evidence="3">
    <location>
        <begin position="25"/>
        <end position="30"/>
    </location>
</feature>
<feature type="strand" evidence="3">
    <location>
        <begin position="34"/>
        <end position="37"/>
    </location>
</feature>
<feature type="helix" evidence="3">
    <location>
        <begin position="40"/>
        <end position="48"/>
    </location>
</feature>
<feature type="helix" evidence="3">
    <location>
        <begin position="55"/>
        <end position="76"/>
    </location>
</feature>
<feature type="helix" evidence="3">
    <location>
        <begin position="82"/>
        <end position="96"/>
    </location>
</feature>
<feature type="helix" evidence="3">
    <location>
        <begin position="105"/>
        <end position="119"/>
    </location>
</feature>
<feature type="helix" evidence="3">
    <location>
        <begin position="127"/>
        <end position="165"/>
    </location>
</feature>
<feature type="strand" evidence="3">
    <location>
        <begin position="169"/>
        <end position="175"/>
    </location>
</feature>
<feature type="turn" evidence="3">
    <location>
        <begin position="181"/>
        <end position="183"/>
    </location>
</feature>
<feature type="strand" evidence="3">
    <location>
        <begin position="184"/>
        <end position="187"/>
    </location>
</feature>
<feature type="helix" evidence="3">
    <location>
        <begin position="190"/>
        <end position="199"/>
    </location>
</feature>
<feature type="strand" evidence="3">
    <location>
        <begin position="203"/>
        <end position="209"/>
    </location>
</feature>
<feature type="turn" evidence="3">
    <location>
        <begin position="212"/>
        <end position="215"/>
    </location>
</feature>
<feature type="helix" evidence="3">
    <location>
        <begin position="216"/>
        <end position="219"/>
    </location>
</feature>
<feature type="helix" evidence="3">
    <location>
        <begin position="221"/>
        <end position="227"/>
    </location>
</feature>
<feature type="strand" evidence="3">
    <location>
        <begin position="232"/>
        <end position="235"/>
    </location>
</feature>
<feature type="helix" evidence="3">
    <location>
        <begin position="237"/>
        <end position="239"/>
    </location>
</feature>
<feature type="helix" evidence="3">
    <location>
        <begin position="240"/>
        <end position="246"/>
    </location>
</feature>
<feature type="strand" evidence="3">
    <location>
        <begin position="251"/>
        <end position="254"/>
    </location>
</feature>
<feature type="strand" evidence="3">
    <location>
        <begin position="257"/>
        <end position="259"/>
    </location>
</feature>
<feature type="strand" evidence="3">
    <location>
        <begin position="265"/>
        <end position="268"/>
    </location>
</feature>
<feature type="helix" evidence="3">
    <location>
        <begin position="271"/>
        <end position="280"/>
    </location>
</feature>
<feature type="strand" evidence="3">
    <location>
        <begin position="285"/>
        <end position="288"/>
    </location>
</feature>
<feature type="helix" evidence="3">
    <location>
        <begin position="291"/>
        <end position="293"/>
    </location>
</feature>
<feature type="helix" evidence="3">
    <location>
        <begin position="301"/>
        <end position="303"/>
    </location>
</feature>
<feature type="helix" evidence="3">
    <location>
        <begin position="312"/>
        <end position="315"/>
    </location>
</feature>
<feature type="turn" evidence="3">
    <location>
        <begin position="318"/>
        <end position="320"/>
    </location>
</feature>
<feature type="strand" evidence="3">
    <location>
        <begin position="331"/>
        <end position="333"/>
    </location>
</feature>
<feature type="strand" evidence="3">
    <location>
        <begin position="336"/>
        <end position="341"/>
    </location>
</feature>
<feature type="helix" evidence="3">
    <location>
        <begin position="343"/>
        <end position="345"/>
    </location>
</feature>
<feature type="strand" evidence="3">
    <location>
        <begin position="348"/>
        <end position="351"/>
    </location>
</feature>
<feature type="strand" evidence="3">
    <location>
        <begin position="361"/>
        <end position="364"/>
    </location>
</feature>
<feature type="helix" evidence="3">
    <location>
        <begin position="368"/>
        <end position="373"/>
    </location>
</feature>
<protein>
    <recommendedName>
        <fullName evidence="1">Methylthioribose-1-phosphate isomerase</fullName>
        <shortName evidence="1">M1Pi</shortName>
        <shortName evidence="1">MTR-1-P isomerase</shortName>
        <ecNumber evidence="1">5.3.1.23</ecNumber>
    </recommendedName>
    <alternativeName>
        <fullName evidence="1">S-methyl-5-thioribose-1-phosphate isomerase</fullName>
    </alternativeName>
    <alternativeName>
        <fullName evidence="1">Translation initiation factor eIF-2B subunit alpha/beta/delta-like protein</fullName>
    </alternativeName>
</protein>
<accession>Q4Q0R9</accession>
<name>MTNA_LEIMA</name>
<keyword id="KW-0002">3D-structure</keyword>
<keyword id="KW-0028">Amino-acid biosynthesis</keyword>
<keyword id="KW-0963">Cytoplasm</keyword>
<keyword id="KW-0413">Isomerase</keyword>
<keyword id="KW-0486">Methionine biosynthesis</keyword>
<keyword id="KW-0539">Nucleus</keyword>
<keyword id="KW-1185">Reference proteome</keyword>
<proteinExistence type="evidence at protein level"/>
<dbReference type="EC" id="5.3.1.23" evidence="1"/>
<dbReference type="EMBL" id="FR796432">
    <property type="protein sequence ID" value="CAJ09465.1"/>
    <property type="status" value="ALT_INIT"/>
    <property type="molecule type" value="Genomic_DNA"/>
</dbReference>
<dbReference type="RefSeq" id="XP_001687079.1">
    <property type="nucleotide sequence ID" value="XM_001687027.1"/>
</dbReference>
<dbReference type="PDB" id="2A0U">
    <property type="method" value="X-ray"/>
    <property type="resolution" value="2.10 A"/>
    <property type="chains" value="A/B=1-375"/>
</dbReference>
<dbReference type="PDBsum" id="2A0U"/>
<dbReference type="SMR" id="Q4Q0R9"/>
<dbReference type="FunCoup" id="Q4Q0R9">
    <property type="interactions" value="183"/>
</dbReference>
<dbReference type="STRING" id="5664.Q4Q0R9"/>
<dbReference type="EnsemblProtists" id="CAJ09465">
    <property type="protein sequence ID" value="CAJ09465"/>
    <property type="gene ID" value="LMJF_36_4930"/>
</dbReference>
<dbReference type="GeneID" id="5655795"/>
<dbReference type="KEGG" id="lma:LMJF_36_4930"/>
<dbReference type="VEuPathDB" id="TriTrypDB:LmjF.36.4930"/>
<dbReference type="VEuPathDB" id="TriTrypDB:LMJFC_360066000"/>
<dbReference type="VEuPathDB" id="TriTrypDB:LMJLV39_360061100"/>
<dbReference type="VEuPathDB" id="TriTrypDB:LMJSD75_360060900"/>
<dbReference type="eggNOG" id="KOG1468">
    <property type="taxonomic scope" value="Eukaryota"/>
</dbReference>
<dbReference type="InParanoid" id="Q4Q0R9"/>
<dbReference type="UniPathway" id="UPA00904">
    <property type="reaction ID" value="UER00874"/>
</dbReference>
<dbReference type="EvolutionaryTrace" id="Q4Q0R9"/>
<dbReference type="Proteomes" id="UP000000542">
    <property type="component" value="Chromosome 36"/>
</dbReference>
<dbReference type="GO" id="GO:0005737">
    <property type="term" value="C:cytoplasm"/>
    <property type="evidence" value="ECO:0007669"/>
    <property type="project" value="UniProtKB-SubCell"/>
</dbReference>
<dbReference type="GO" id="GO:0005634">
    <property type="term" value="C:nucleus"/>
    <property type="evidence" value="ECO:0007669"/>
    <property type="project" value="UniProtKB-SubCell"/>
</dbReference>
<dbReference type="GO" id="GO:0046523">
    <property type="term" value="F:S-methyl-5-thioribose-1-phosphate isomerase activity"/>
    <property type="evidence" value="ECO:0000318"/>
    <property type="project" value="GO_Central"/>
</dbReference>
<dbReference type="GO" id="GO:0019509">
    <property type="term" value="P:L-methionine salvage from methylthioadenosine"/>
    <property type="evidence" value="ECO:0000318"/>
    <property type="project" value="GO_Central"/>
</dbReference>
<dbReference type="FunFam" id="1.20.120.420:FF:000001">
    <property type="entry name" value="Methylthioribose-1-phosphate isomerase"/>
    <property type="match status" value="1"/>
</dbReference>
<dbReference type="FunFam" id="3.40.50.10470:FF:000006">
    <property type="entry name" value="Methylthioribose-1-phosphate isomerase"/>
    <property type="match status" value="1"/>
</dbReference>
<dbReference type="Gene3D" id="1.20.120.420">
    <property type="entry name" value="translation initiation factor eif-2b, domain 1"/>
    <property type="match status" value="1"/>
</dbReference>
<dbReference type="Gene3D" id="3.40.50.10470">
    <property type="entry name" value="Translation initiation factor eif-2b, domain 2"/>
    <property type="match status" value="1"/>
</dbReference>
<dbReference type="HAMAP" id="MF_01678">
    <property type="entry name" value="Salvage_MtnA"/>
    <property type="match status" value="1"/>
</dbReference>
<dbReference type="InterPro" id="IPR000649">
    <property type="entry name" value="IF-2B-related"/>
</dbReference>
<dbReference type="InterPro" id="IPR005251">
    <property type="entry name" value="IF-M1Pi"/>
</dbReference>
<dbReference type="InterPro" id="IPR042529">
    <property type="entry name" value="IF_2B-like_C"/>
</dbReference>
<dbReference type="InterPro" id="IPR011559">
    <property type="entry name" value="Initiation_fac_2B_a/b/d"/>
</dbReference>
<dbReference type="InterPro" id="IPR027363">
    <property type="entry name" value="M1Pi_N"/>
</dbReference>
<dbReference type="InterPro" id="IPR037171">
    <property type="entry name" value="NagB/RpiA_transferase-like"/>
</dbReference>
<dbReference type="NCBIfam" id="TIGR00524">
    <property type="entry name" value="eIF-2B_rel"/>
    <property type="match status" value="1"/>
</dbReference>
<dbReference type="NCBIfam" id="NF004326">
    <property type="entry name" value="PRK05720.1"/>
    <property type="match status" value="1"/>
</dbReference>
<dbReference type="NCBIfam" id="TIGR00512">
    <property type="entry name" value="salvage_mtnA"/>
    <property type="match status" value="1"/>
</dbReference>
<dbReference type="PANTHER" id="PTHR43475">
    <property type="entry name" value="METHYLTHIORIBOSE-1-PHOSPHATE ISOMERASE"/>
    <property type="match status" value="1"/>
</dbReference>
<dbReference type="PANTHER" id="PTHR43475:SF1">
    <property type="entry name" value="METHYLTHIORIBOSE-1-PHOSPHATE ISOMERASE"/>
    <property type="match status" value="1"/>
</dbReference>
<dbReference type="Pfam" id="PF01008">
    <property type="entry name" value="IF-2B"/>
    <property type="match status" value="1"/>
</dbReference>
<dbReference type="SUPFAM" id="SSF100950">
    <property type="entry name" value="NagB/RpiA/CoA transferase-like"/>
    <property type="match status" value="1"/>
</dbReference>
<evidence type="ECO:0000255" key="1">
    <source>
        <dbReference type="HAMAP-Rule" id="MF_03119"/>
    </source>
</evidence>
<evidence type="ECO:0000305" key="2"/>
<evidence type="ECO:0007829" key="3">
    <source>
        <dbReference type="PDB" id="2A0U"/>
    </source>
</evidence>
<comment type="function">
    <text evidence="1">Catalyzes the interconversion of methylthioribose-1-phosphate (MTR-1-P) into methylthioribulose-1-phosphate (MTRu-1-P).</text>
</comment>
<comment type="catalytic activity">
    <reaction evidence="1">
        <text>5-(methylsulfanyl)-alpha-D-ribose 1-phosphate = 5-(methylsulfanyl)-D-ribulose 1-phosphate</text>
        <dbReference type="Rhea" id="RHEA:19989"/>
        <dbReference type="ChEBI" id="CHEBI:58533"/>
        <dbReference type="ChEBI" id="CHEBI:58548"/>
        <dbReference type="EC" id="5.3.1.23"/>
    </reaction>
</comment>
<comment type="pathway">
    <text evidence="1">Amino-acid biosynthesis; L-methionine biosynthesis via salvage pathway; L-methionine from S-methyl-5-thio-alpha-D-ribose 1-phosphate: step 1/6.</text>
</comment>
<comment type="subcellular location">
    <subcellularLocation>
        <location evidence="1">Cytoplasm</location>
    </subcellularLocation>
    <subcellularLocation>
        <location evidence="1">Nucleus</location>
    </subcellularLocation>
</comment>
<comment type="similarity">
    <text evidence="1">Belongs to the eIF-2B alpha/beta/delta subunits family. MtnA subfamily.</text>
</comment>
<comment type="sequence caution" evidence="2">
    <conflict type="erroneous initiation">
        <sequence resource="EMBL-CDS" id="CAJ09465"/>
    </conflict>
    <text>Extended N-terminus.</text>
</comment>
<reference key="1">
    <citation type="journal article" date="2005" name="Science">
        <title>The genome of the kinetoplastid parasite, Leishmania major.</title>
        <authorList>
            <person name="Ivens A.C."/>
            <person name="Peacock C.S."/>
            <person name="Worthey E.A."/>
            <person name="Murphy L."/>
            <person name="Aggarwal G."/>
            <person name="Berriman M."/>
            <person name="Sisk E."/>
            <person name="Rajandream M.A."/>
            <person name="Adlem E."/>
            <person name="Aert R."/>
            <person name="Anupama A."/>
            <person name="Apostolou Z."/>
            <person name="Attipoe P."/>
            <person name="Bason N."/>
            <person name="Bauser C."/>
            <person name="Beck A."/>
            <person name="Beverley S.M."/>
            <person name="Bianchettin G."/>
            <person name="Borzym K."/>
            <person name="Bothe G."/>
            <person name="Bruschi C.V."/>
            <person name="Collins M."/>
            <person name="Cadag E."/>
            <person name="Ciarloni L."/>
            <person name="Clayton C."/>
            <person name="Coulson R.M.R."/>
            <person name="Cronin A."/>
            <person name="Cruz A.K."/>
            <person name="Davies R.M."/>
            <person name="De Gaudenzi J."/>
            <person name="Dobson D.E."/>
            <person name="Duesterhoeft A."/>
            <person name="Fazelina G."/>
            <person name="Fosker N."/>
            <person name="Frasch A.C."/>
            <person name="Fraser A."/>
            <person name="Fuchs M."/>
            <person name="Gabel C."/>
            <person name="Goble A."/>
            <person name="Goffeau A."/>
            <person name="Harris D."/>
            <person name="Hertz-Fowler C."/>
            <person name="Hilbert H."/>
            <person name="Horn D."/>
            <person name="Huang Y."/>
            <person name="Klages S."/>
            <person name="Knights A."/>
            <person name="Kube M."/>
            <person name="Larke N."/>
            <person name="Litvin L."/>
            <person name="Lord A."/>
            <person name="Louie T."/>
            <person name="Marra M."/>
            <person name="Masuy D."/>
            <person name="Matthews K."/>
            <person name="Michaeli S."/>
            <person name="Mottram J.C."/>
            <person name="Mueller-Auer S."/>
            <person name="Munden H."/>
            <person name="Nelson S."/>
            <person name="Norbertczak H."/>
            <person name="Oliver K."/>
            <person name="O'neil S."/>
            <person name="Pentony M."/>
            <person name="Pohl T.M."/>
            <person name="Price C."/>
            <person name="Purnelle B."/>
            <person name="Quail M.A."/>
            <person name="Rabbinowitsch E."/>
            <person name="Reinhardt R."/>
            <person name="Rieger M."/>
            <person name="Rinta J."/>
            <person name="Robben J."/>
            <person name="Robertson L."/>
            <person name="Ruiz J.C."/>
            <person name="Rutter S."/>
            <person name="Saunders D."/>
            <person name="Schaefer M."/>
            <person name="Schein J."/>
            <person name="Schwartz D.C."/>
            <person name="Seeger K."/>
            <person name="Seyler A."/>
            <person name="Sharp S."/>
            <person name="Shin H."/>
            <person name="Sivam D."/>
            <person name="Squares R."/>
            <person name="Squares S."/>
            <person name="Tosato V."/>
            <person name="Vogt C."/>
            <person name="Volckaert G."/>
            <person name="Wambutt R."/>
            <person name="Warren T."/>
            <person name="Wedler H."/>
            <person name="Woodward J."/>
            <person name="Zhou S."/>
            <person name="Zimmermann W."/>
            <person name="Smith D.F."/>
            <person name="Blackwell J.M."/>
            <person name="Stuart K.D."/>
            <person name="Barrell B.G."/>
            <person name="Myler P.J."/>
        </authorList>
    </citation>
    <scope>NUCLEOTIDE SEQUENCE [LARGE SCALE GENOMIC DNA]</scope>
    <source>
        <strain>MHOM/IL/81/Friedlin</strain>
    </source>
</reference>
<gene>
    <name type="ORF">LmjF36.4930</name>
    <name type="ORF">LmjF_36_4930</name>
</gene>
<organism>
    <name type="scientific">Leishmania major</name>
    <dbReference type="NCBI Taxonomy" id="5664"/>
    <lineage>
        <taxon>Eukaryota</taxon>
        <taxon>Discoba</taxon>
        <taxon>Euglenozoa</taxon>
        <taxon>Kinetoplastea</taxon>
        <taxon>Metakinetoplastina</taxon>
        <taxon>Trypanosomatida</taxon>
        <taxon>Trypanosomatidae</taxon>
        <taxon>Leishmaniinae</taxon>
        <taxon>Leishmania</taxon>
    </lineage>
</organism>